<keyword id="KW-1185">Reference proteome</keyword>
<protein>
    <recommendedName>
        <fullName>Uncharacterized protein MJ0558</fullName>
    </recommendedName>
</protein>
<organism>
    <name type="scientific">Methanocaldococcus jannaschii (strain ATCC 43067 / DSM 2661 / JAL-1 / JCM 10045 / NBRC 100440)</name>
    <name type="common">Methanococcus jannaschii</name>
    <dbReference type="NCBI Taxonomy" id="243232"/>
    <lineage>
        <taxon>Archaea</taxon>
        <taxon>Methanobacteriati</taxon>
        <taxon>Methanobacteriota</taxon>
        <taxon>Methanomada group</taxon>
        <taxon>Methanococci</taxon>
        <taxon>Methanococcales</taxon>
        <taxon>Methanocaldococcaceae</taxon>
        <taxon>Methanocaldococcus</taxon>
    </lineage>
</organism>
<gene>
    <name type="ordered locus">MJ0558</name>
</gene>
<proteinExistence type="predicted"/>
<reference key="1">
    <citation type="journal article" date="1996" name="Science">
        <title>Complete genome sequence of the methanogenic archaeon, Methanococcus jannaschii.</title>
        <authorList>
            <person name="Bult C.J."/>
            <person name="White O."/>
            <person name="Olsen G.J."/>
            <person name="Zhou L."/>
            <person name="Fleischmann R.D."/>
            <person name="Sutton G.G."/>
            <person name="Blake J.A."/>
            <person name="FitzGerald L.M."/>
            <person name="Clayton R.A."/>
            <person name="Gocayne J.D."/>
            <person name="Kerlavage A.R."/>
            <person name="Dougherty B.A."/>
            <person name="Tomb J.-F."/>
            <person name="Adams M.D."/>
            <person name="Reich C.I."/>
            <person name="Overbeek R."/>
            <person name="Kirkness E.F."/>
            <person name="Weinstock K.G."/>
            <person name="Merrick J.M."/>
            <person name="Glodek A."/>
            <person name="Scott J.L."/>
            <person name="Geoghagen N.S.M."/>
            <person name="Weidman J.F."/>
            <person name="Fuhrmann J.L."/>
            <person name="Nguyen D."/>
            <person name="Utterback T.R."/>
            <person name="Kelley J.M."/>
            <person name="Peterson J.D."/>
            <person name="Sadow P.W."/>
            <person name="Hanna M.C."/>
            <person name="Cotton M.D."/>
            <person name="Roberts K.M."/>
            <person name="Hurst M.A."/>
            <person name="Kaine B.P."/>
            <person name="Borodovsky M."/>
            <person name="Klenk H.-P."/>
            <person name="Fraser C.M."/>
            <person name="Smith H.O."/>
            <person name="Woese C.R."/>
            <person name="Venter J.C."/>
        </authorList>
    </citation>
    <scope>NUCLEOTIDE SEQUENCE [LARGE SCALE GENOMIC DNA]</scope>
    <source>
        <strain>ATCC 43067 / DSM 2661 / JAL-1 / JCM 10045 / NBRC 100440</strain>
    </source>
</reference>
<accession>Q57978</accession>
<name>Y558_METJA</name>
<sequence length="261" mass="29206">MKKRNITEFQVLSEIIRKQPHIKQKEIAENLGITVQAVSEHIRNLVKEGYVKSRGRGEYVVTEKGLRKLKNWISEFKDYLDEINTAVYRYKDIWPAIADEDVKDGETVYLFMKNGLLYASKQPKGEAKAKALYGGKKGEDIAICEIKGIIDVPKGKVIVFRIPPEVVGGSRAVDFNLIKENIDNLDDYVIATMGTVAYVVACKLGLKPDIRFAVPEAIVNACNRGCNVIALITGKMAEKVIKKLDNAKISYTVLDATKENK</sequence>
<feature type="chain" id="PRO_0000106930" description="Uncharacterized protein MJ0558">
    <location>
        <begin position="1"/>
        <end position="261"/>
    </location>
</feature>
<dbReference type="EMBL" id="L77117">
    <property type="protein sequence ID" value="AAB98552.1"/>
    <property type="molecule type" value="Genomic_DNA"/>
</dbReference>
<dbReference type="PIR" id="F64369">
    <property type="entry name" value="F64369"/>
</dbReference>
<dbReference type="RefSeq" id="WP_010870062.1">
    <property type="nucleotide sequence ID" value="NC_000909.1"/>
</dbReference>
<dbReference type="SMR" id="Q57978"/>
<dbReference type="STRING" id="243232.MJ_0558"/>
<dbReference type="PaxDb" id="243232-MJ_0558"/>
<dbReference type="EnsemblBacteria" id="AAB98552">
    <property type="protein sequence ID" value="AAB98552"/>
    <property type="gene ID" value="MJ_0558"/>
</dbReference>
<dbReference type="GeneID" id="1451423"/>
<dbReference type="KEGG" id="mja:MJ_0558"/>
<dbReference type="eggNOG" id="arCOG04399">
    <property type="taxonomic scope" value="Archaea"/>
</dbReference>
<dbReference type="HOGENOM" id="CLU_090237_0_0_2"/>
<dbReference type="InParanoid" id="Q57978"/>
<dbReference type="OrthoDB" id="56502at2157"/>
<dbReference type="PhylomeDB" id="Q57978"/>
<dbReference type="Proteomes" id="UP000000805">
    <property type="component" value="Chromosome"/>
</dbReference>
<dbReference type="GO" id="GO:0003677">
    <property type="term" value="F:DNA binding"/>
    <property type="evidence" value="ECO:0007669"/>
    <property type="project" value="InterPro"/>
</dbReference>
<dbReference type="GO" id="GO:0006355">
    <property type="term" value="P:regulation of DNA-templated transcription"/>
    <property type="evidence" value="ECO:0007669"/>
    <property type="project" value="InterPro"/>
</dbReference>
<dbReference type="CDD" id="cd00092">
    <property type="entry name" value="HTH_CRP"/>
    <property type="match status" value="1"/>
</dbReference>
<dbReference type="Gene3D" id="1.10.10.10">
    <property type="entry name" value="Winged helix-like DNA-binding domain superfamily/Winged helix DNA-binding domain"/>
    <property type="match status" value="1"/>
</dbReference>
<dbReference type="InterPro" id="IPR057161">
    <property type="entry name" value="DUF7839"/>
</dbReference>
<dbReference type="InterPro" id="IPR012318">
    <property type="entry name" value="HTH_CRP"/>
</dbReference>
<dbReference type="InterPro" id="IPR012015">
    <property type="entry name" value="UCP_HTH_arc"/>
</dbReference>
<dbReference type="InterPro" id="IPR036388">
    <property type="entry name" value="WH-like_DNA-bd_sf"/>
</dbReference>
<dbReference type="InterPro" id="IPR036390">
    <property type="entry name" value="WH_DNA-bd_sf"/>
</dbReference>
<dbReference type="PANTHER" id="PTHR43704">
    <property type="entry name" value="BSR5907 PROTEIN"/>
    <property type="match status" value="1"/>
</dbReference>
<dbReference type="PANTHER" id="PTHR43704:SF2">
    <property type="entry name" value="HTH CRP-TYPE DOMAIN-CONTAINING PROTEIN"/>
    <property type="match status" value="1"/>
</dbReference>
<dbReference type="Pfam" id="PF25211">
    <property type="entry name" value="DUF7839"/>
    <property type="match status" value="1"/>
</dbReference>
<dbReference type="Pfam" id="PF13412">
    <property type="entry name" value="HTH_24"/>
    <property type="match status" value="1"/>
</dbReference>
<dbReference type="PIRSF" id="PIRSF004955">
    <property type="entry name" value="HTH_arch"/>
    <property type="match status" value="1"/>
</dbReference>
<dbReference type="SMART" id="SM00419">
    <property type="entry name" value="HTH_CRP"/>
    <property type="match status" value="1"/>
</dbReference>
<dbReference type="SUPFAM" id="SSF46785">
    <property type="entry name" value="Winged helix' DNA-binding domain"/>
    <property type="match status" value="1"/>
</dbReference>